<gene>
    <name type="ordered locus">USA300HOU_1400</name>
</gene>
<accession>A8Z442</accession>
<evidence type="ECO:0000255" key="1">
    <source>
        <dbReference type="HAMAP-Rule" id="MF_00760"/>
    </source>
</evidence>
<protein>
    <recommendedName>
        <fullName evidence="1">UPF0302 protein USA300HOU_1400</fullName>
    </recommendedName>
</protein>
<feature type="chain" id="PRO_1000083527" description="UPF0302 protein USA300HOU_1400">
    <location>
        <begin position="1"/>
        <end position="191"/>
    </location>
</feature>
<organism>
    <name type="scientific">Staphylococcus aureus (strain USA300 / TCH1516)</name>
    <dbReference type="NCBI Taxonomy" id="451516"/>
    <lineage>
        <taxon>Bacteria</taxon>
        <taxon>Bacillati</taxon>
        <taxon>Bacillota</taxon>
        <taxon>Bacilli</taxon>
        <taxon>Bacillales</taxon>
        <taxon>Staphylococcaceae</taxon>
        <taxon>Staphylococcus</taxon>
    </lineage>
</organism>
<proteinExistence type="inferred from homology"/>
<name>Y1400_STAAT</name>
<reference key="1">
    <citation type="journal article" date="2007" name="BMC Microbiol.">
        <title>Subtle genetic changes enhance virulence of methicillin resistant and sensitive Staphylococcus aureus.</title>
        <authorList>
            <person name="Highlander S.K."/>
            <person name="Hulten K.G."/>
            <person name="Qin X."/>
            <person name="Jiang H."/>
            <person name="Yerrapragada S."/>
            <person name="Mason E.O. Jr."/>
            <person name="Shang Y."/>
            <person name="Williams T.M."/>
            <person name="Fortunov R.M."/>
            <person name="Liu Y."/>
            <person name="Igboeli O."/>
            <person name="Petrosino J."/>
            <person name="Tirumalai M."/>
            <person name="Uzman A."/>
            <person name="Fox G.E."/>
            <person name="Cardenas A.M."/>
            <person name="Muzny D.M."/>
            <person name="Hemphill L."/>
            <person name="Ding Y."/>
            <person name="Dugan S."/>
            <person name="Blyth P.R."/>
            <person name="Buhay C.J."/>
            <person name="Dinh H.H."/>
            <person name="Hawes A.C."/>
            <person name="Holder M."/>
            <person name="Kovar C.L."/>
            <person name="Lee S.L."/>
            <person name="Liu W."/>
            <person name="Nazareth L.V."/>
            <person name="Wang Q."/>
            <person name="Zhou J."/>
            <person name="Kaplan S.L."/>
            <person name="Weinstock G.M."/>
        </authorList>
    </citation>
    <scope>NUCLEOTIDE SEQUENCE [LARGE SCALE GENOMIC DNA]</scope>
    <source>
        <strain>USA300 / TCH1516</strain>
    </source>
</reference>
<comment type="similarity">
    <text evidence="1">Belongs to the UPF0302 family.</text>
</comment>
<dbReference type="EMBL" id="CP000730">
    <property type="protein sequence ID" value="ABX29410.1"/>
    <property type="molecule type" value="Genomic_DNA"/>
</dbReference>
<dbReference type="RefSeq" id="WP_000004947.1">
    <property type="nucleotide sequence ID" value="NC_010079.1"/>
</dbReference>
<dbReference type="SMR" id="A8Z442"/>
<dbReference type="KEGG" id="sax:USA300HOU_1400"/>
<dbReference type="HOGENOM" id="CLU_122408_0_0_9"/>
<dbReference type="BioCyc" id="SAUR451516-HMP:GTV5-1419-MONOMER"/>
<dbReference type="Gene3D" id="3.40.1530.30">
    <property type="entry name" value="Uncharacterised family UPF0302, N-terminal domain"/>
    <property type="match status" value="1"/>
</dbReference>
<dbReference type="HAMAP" id="MF_00760">
    <property type="entry name" value="UPF0302"/>
    <property type="match status" value="1"/>
</dbReference>
<dbReference type="InterPro" id="IPR014957">
    <property type="entry name" value="IDEAL_dom"/>
</dbReference>
<dbReference type="InterPro" id="IPR011188">
    <property type="entry name" value="UPF0302"/>
</dbReference>
<dbReference type="InterPro" id="IPR014963">
    <property type="entry name" value="UPF0302_N"/>
</dbReference>
<dbReference type="InterPro" id="IPR038091">
    <property type="entry name" value="UPF0302_N_sf"/>
</dbReference>
<dbReference type="Pfam" id="PF08858">
    <property type="entry name" value="IDEAL"/>
    <property type="match status" value="1"/>
</dbReference>
<dbReference type="Pfam" id="PF08864">
    <property type="entry name" value="UPF0302"/>
    <property type="match status" value="1"/>
</dbReference>
<dbReference type="PIRSF" id="PIRSF007165">
    <property type="entry name" value="UCP007165"/>
    <property type="match status" value="1"/>
</dbReference>
<dbReference type="SMART" id="SM00914">
    <property type="entry name" value="IDEAL"/>
    <property type="match status" value="1"/>
</dbReference>
<sequence>MSETFNQIKESFIEYLLFQYRFKSRIAVWVLNYIKVNEAKLANIHFVDTKINHHETLEIAEVGSHASAIQFTKRNIKLMNTNEIFDYIANHNCAFDIQIHFANVSKREQRLDDLIVAQLTESPSYQTYLHDLNSMAIDRHKHALLIDYLLHNIDLSLQMNEKQRFYQLTQILNTLKLVNKHNQFEDLADDN</sequence>